<protein>
    <recommendedName>
        <fullName>Putative uncharacterized protein ORF7</fullName>
    </recommendedName>
</protein>
<feature type="chain" id="PRO_0000208257" description="Putative uncharacterized protein ORF7">
    <location>
        <begin position="1"/>
        <end position="55"/>
    </location>
</feature>
<reference key="1">
    <citation type="journal article" date="1988" name="Plasmid">
        <title>Complete nucleotide sequence and genetic organization of the bacteriocinogenic plasmid, pIP404, from Clostridium perfringens.</title>
        <authorList>
            <person name="Garnier T."/>
            <person name="Cole S.T."/>
        </authorList>
    </citation>
    <scope>NUCLEOTIDE SEQUENCE [GENOMIC DNA]</scope>
    <source>
        <strain>CPN50</strain>
    </source>
</reference>
<organism>
    <name type="scientific">Clostridium perfringens</name>
    <dbReference type="NCBI Taxonomy" id="1502"/>
    <lineage>
        <taxon>Bacteria</taxon>
        <taxon>Bacillati</taxon>
        <taxon>Bacillota</taxon>
        <taxon>Clostridia</taxon>
        <taxon>Eubacteriales</taxon>
        <taxon>Clostridiaceae</taxon>
        <taxon>Clostridium</taxon>
    </lineage>
</organism>
<keyword id="KW-0614">Plasmid</keyword>
<dbReference type="EMBL" id="M32882">
    <property type="protein sequence ID" value="AAA98253.1"/>
    <property type="molecule type" value="Genomic_DNA"/>
</dbReference>
<dbReference type="PIR" id="JT0359">
    <property type="entry name" value="JT0359"/>
</dbReference>
<dbReference type="RefSeq" id="NP_040455.1">
    <property type="nucleotide sequence ID" value="NC_001388.1"/>
</dbReference>
<dbReference type="RefSeq" id="WP_010889927.1">
    <property type="nucleotide sequence ID" value="NZ_UFXJ01000001.1"/>
</dbReference>
<dbReference type="SMR" id="P18018"/>
<sequence length="55" mass="6082">MKNIDSIKLRIFSSICFAIAGILGLVDKNYLLGGAFILMLVSNIILIISEKKKLK</sequence>
<proteinExistence type="predicted"/>
<accession>P18018</accession>
<geneLocation type="plasmid">
    <name>pIP404</name>
</geneLocation>
<name>YPI8_CLOPF</name>